<protein>
    <recommendedName>
        <fullName evidence="1">Sec-independent protein translocase protein TatB</fullName>
    </recommendedName>
</protein>
<sequence length="175" mass="19275">MLDLGLTKMALIGVVALVVLGPERLPRVARTAGALFGRAQRYINDVKAEVTREIELDELRRMKSEFEAAATNVETSVQDNLRKHESELNDAWNSGTSVSPSIAGGALEDVGNAGNTSWPGSTPAAGAKRKNWRVRQTAMPTWYKRATTRRTRVQSGAARVARHTPATMRRPTRFF</sequence>
<comment type="function">
    <text evidence="1">Part of the twin-arginine translocation (Tat) system that transports large folded proteins containing a characteristic twin-arginine motif in their signal peptide across membranes. Together with TatC, TatB is part of a receptor directly interacting with Tat signal peptides. TatB may form an oligomeric binding site that transiently accommodates folded Tat precursor proteins before their translocation.</text>
</comment>
<comment type="subunit">
    <text evidence="1">The Tat system comprises two distinct complexes: a TatABC complex, containing multiple copies of TatA, TatB and TatC subunits, and a separate TatA complex, containing only TatA subunits. Substrates initially bind to the TatABC complex, which probably triggers association of the separate TatA complex to form the active translocon.</text>
</comment>
<comment type="subcellular location">
    <subcellularLocation>
        <location evidence="1">Cell inner membrane</location>
        <topology evidence="1">Single-pass membrane protein</topology>
    </subcellularLocation>
</comment>
<comment type="similarity">
    <text evidence="1">Belongs to the TatB family.</text>
</comment>
<organism>
    <name type="scientific">Paraburkholderia xenovorans (strain LB400)</name>
    <dbReference type="NCBI Taxonomy" id="266265"/>
    <lineage>
        <taxon>Bacteria</taxon>
        <taxon>Pseudomonadati</taxon>
        <taxon>Pseudomonadota</taxon>
        <taxon>Betaproteobacteria</taxon>
        <taxon>Burkholderiales</taxon>
        <taxon>Burkholderiaceae</taxon>
        <taxon>Paraburkholderia</taxon>
    </lineage>
</organism>
<reference key="1">
    <citation type="journal article" date="2006" name="Proc. Natl. Acad. Sci. U.S.A.">
        <title>Burkholderia xenovorans LB400 harbors a multi-replicon, 9.73-Mbp genome shaped for versatility.</title>
        <authorList>
            <person name="Chain P.S.G."/>
            <person name="Denef V.J."/>
            <person name="Konstantinidis K.T."/>
            <person name="Vergez L.M."/>
            <person name="Agullo L."/>
            <person name="Reyes V.L."/>
            <person name="Hauser L."/>
            <person name="Cordova M."/>
            <person name="Gomez L."/>
            <person name="Gonzalez M."/>
            <person name="Land M."/>
            <person name="Lao V."/>
            <person name="Larimer F."/>
            <person name="LiPuma J.J."/>
            <person name="Mahenthiralingam E."/>
            <person name="Malfatti S.A."/>
            <person name="Marx C.J."/>
            <person name="Parnell J.J."/>
            <person name="Ramette A."/>
            <person name="Richardson P."/>
            <person name="Seeger M."/>
            <person name="Smith D."/>
            <person name="Spilker T."/>
            <person name="Sul W.J."/>
            <person name="Tsoi T.V."/>
            <person name="Ulrich L.E."/>
            <person name="Zhulin I.B."/>
            <person name="Tiedje J.M."/>
        </authorList>
    </citation>
    <scope>NUCLEOTIDE SEQUENCE [LARGE SCALE GENOMIC DNA]</scope>
    <source>
        <strain>LB400</strain>
    </source>
</reference>
<accession>Q13TR6</accession>
<keyword id="KW-0997">Cell inner membrane</keyword>
<keyword id="KW-1003">Cell membrane</keyword>
<keyword id="KW-0472">Membrane</keyword>
<keyword id="KW-0653">Protein transport</keyword>
<keyword id="KW-1185">Reference proteome</keyword>
<keyword id="KW-0811">Translocation</keyword>
<keyword id="KW-0812">Transmembrane</keyword>
<keyword id="KW-1133">Transmembrane helix</keyword>
<keyword id="KW-0813">Transport</keyword>
<proteinExistence type="inferred from homology"/>
<dbReference type="EMBL" id="CP000270">
    <property type="protein sequence ID" value="ABE32523.1"/>
    <property type="molecule type" value="Genomic_DNA"/>
</dbReference>
<dbReference type="RefSeq" id="WP_011489985.1">
    <property type="nucleotide sequence ID" value="NC_007951.1"/>
</dbReference>
<dbReference type="SMR" id="Q13TR6"/>
<dbReference type="STRING" id="266265.Bxe_A0410"/>
<dbReference type="KEGG" id="bxb:DR64_2580"/>
<dbReference type="KEGG" id="bxe:Bxe_A0410"/>
<dbReference type="PATRIC" id="fig|266265.5.peg.4210"/>
<dbReference type="eggNOG" id="COG1826">
    <property type="taxonomic scope" value="Bacteria"/>
</dbReference>
<dbReference type="OrthoDB" id="9816005at2"/>
<dbReference type="Proteomes" id="UP000001817">
    <property type="component" value="Chromosome 1"/>
</dbReference>
<dbReference type="GO" id="GO:0033281">
    <property type="term" value="C:TAT protein transport complex"/>
    <property type="evidence" value="ECO:0007669"/>
    <property type="project" value="UniProtKB-UniRule"/>
</dbReference>
<dbReference type="GO" id="GO:0008320">
    <property type="term" value="F:protein transmembrane transporter activity"/>
    <property type="evidence" value="ECO:0007669"/>
    <property type="project" value="UniProtKB-UniRule"/>
</dbReference>
<dbReference type="GO" id="GO:0043953">
    <property type="term" value="P:protein transport by the Tat complex"/>
    <property type="evidence" value="ECO:0007669"/>
    <property type="project" value="UniProtKB-UniRule"/>
</dbReference>
<dbReference type="Gene3D" id="1.20.5.3310">
    <property type="match status" value="1"/>
</dbReference>
<dbReference type="HAMAP" id="MF_00237">
    <property type="entry name" value="TatB"/>
    <property type="match status" value="1"/>
</dbReference>
<dbReference type="InterPro" id="IPR003369">
    <property type="entry name" value="TatA/B/E"/>
</dbReference>
<dbReference type="InterPro" id="IPR018448">
    <property type="entry name" value="TatB"/>
</dbReference>
<dbReference type="NCBIfam" id="TIGR01410">
    <property type="entry name" value="tatB"/>
    <property type="match status" value="1"/>
</dbReference>
<dbReference type="PANTHER" id="PTHR33162">
    <property type="entry name" value="SEC-INDEPENDENT PROTEIN TRANSLOCASE PROTEIN TATA, CHLOROPLASTIC"/>
    <property type="match status" value="1"/>
</dbReference>
<dbReference type="PANTHER" id="PTHR33162:SF1">
    <property type="entry name" value="SEC-INDEPENDENT PROTEIN TRANSLOCASE PROTEIN TATA, CHLOROPLASTIC"/>
    <property type="match status" value="1"/>
</dbReference>
<dbReference type="Pfam" id="PF02416">
    <property type="entry name" value="TatA_B_E"/>
    <property type="match status" value="1"/>
</dbReference>
<dbReference type="PRINTS" id="PR01506">
    <property type="entry name" value="TATBPROTEIN"/>
</dbReference>
<gene>
    <name evidence="1" type="primary">tatB</name>
    <name type="ordered locus">Bxeno_A3985</name>
    <name type="ORF">Bxe_A0410</name>
</gene>
<name>TATB_PARXL</name>
<evidence type="ECO:0000255" key="1">
    <source>
        <dbReference type="HAMAP-Rule" id="MF_00237"/>
    </source>
</evidence>
<evidence type="ECO:0000256" key="2">
    <source>
        <dbReference type="SAM" id="MobiDB-lite"/>
    </source>
</evidence>
<feature type="chain" id="PRO_0000301158" description="Sec-independent protein translocase protein TatB">
    <location>
        <begin position="1"/>
        <end position="175"/>
    </location>
</feature>
<feature type="transmembrane region" description="Helical" evidence="1">
    <location>
        <begin position="1"/>
        <end position="21"/>
    </location>
</feature>
<feature type="region of interest" description="Disordered" evidence="2">
    <location>
        <begin position="104"/>
        <end position="132"/>
    </location>
</feature>
<feature type="region of interest" description="Disordered" evidence="2">
    <location>
        <begin position="155"/>
        <end position="175"/>
    </location>
</feature>